<dbReference type="EC" id="2.7.4.3" evidence="1"/>
<dbReference type="EMBL" id="CP001111">
    <property type="protein sequence ID" value="ACF53001.1"/>
    <property type="molecule type" value="Genomic_DNA"/>
</dbReference>
<dbReference type="RefSeq" id="WP_012512023.1">
    <property type="nucleotide sequence ID" value="NC_011071.1"/>
</dbReference>
<dbReference type="SMR" id="B4SI37"/>
<dbReference type="STRING" id="391008.Smal_3302"/>
<dbReference type="KEGG" id="smt:Smal_3302"/>
<dbReference type="eggNOG" id="COG0563">
    <property type="taxonomic scope" value="Bacteria"/>
</dbReference>
<dbReference type="HOGENOM" id="CLU_032354_4_1_6"/>
<dbReference type="OrthoDB" id="9805030at2"/>
<dbReference type="UniPathway" id="UPA00588">
    <property type="reaction ID" value="UER00649"/>
</dbReference>
<dbReference type="Proteomes" id="UP000001867">
    <property type="component" value="Chromosome"/>
</dbReference>
<dbReference type="GO" id="GO:0005737">
    <property type="term" value="C:cytoplasm"/>
    <property type="evidence" value="ECO:0007669"/>
    <property type="project" value="UniProtKB-SubCell"/>
</dbReference>
<dbReference type="GO" id="GO:0004017">
    <property type="term" value="F:adenylate kinase activity"/>
    <property type="evidence" value="ECO:0007669"/>
    <property type="project" value="UniProtKB-UniRule"/>
</dbReference>
<dbReference type="GO" id="GO:0005524">
    <property type="term" value="F:ATP binding"/>
    <property type="evidence" value="ECO:0007669"/>
    <property type="project" value="UniProtKB-UniRule"/>
</dbReference>
<dbReference type="GO" id="GO:0044209">
    <property type="term" value="P:AMP salvage"/>
    <property type="evidence" value="ECO:0007669"/>
    <property type="project" value="UniProtKB-UniRule"/>
</dbReference>
<dbReference type="CDD" id="cd01428">
    <property type="entry name" value="ADK"/>
    <property type="match status" value="1"/>
</dbReference>
<dbReference type="Gene3D" id="3.40.50.300">
    <property type="entry name" value="P-loop containing nucleotide triphosphate hydrolases"/>
    <property type="match status" value="1"/>
</dbReference>
<dbReference type="HAMAP" id="MF_00235">
    <property type="entry name" value="Adenylate_kinase_Adk"/>
    <property type="match status" value="1"/>
</dbReference>
<dbReference type="InterPro" id="IPR006259">
    <property type="entry name" value="Adenyl_kin_sub"/>
</dbReference>
<dbReference type="InterPro" id="IPR000850">
    <property type="entry name" value="Adenylat/UMP-CMP_kin"/>
</dbReference>
<dbReference type="InterPro" id="IPR033690">
    <property type="entry name" value="Adenylat_kinase_CS"/>
</dbReference>
<dbReference type="InterPro" id="IPR027417">
    <property type="entry name" value="P-loop_NTPase"/>
</dbReference>
<dbReference type="NCBIfam" id="TIGR01351">
    <property type="entry name" value="adk"/>
    <property type="match status" value="1"/>
</dbReference>
<dbReference type="NCBIfam" id="NF001381">
    <property type="entry name" value="PRK00279.1-3"/>
    <property type="match status" value="1"/>
</dbReference>
<dbReference type="NCBIfam" id="NF011100">
    <property type="entry name" value="PRK14527.1"/>
    <property type="match status" value="1"/>
</dbReference>
<dbReference type="NCBIfam" id="NF011101">
    <property type="entry name" value="PRK14528.1"/>
    <property type="match status" value="1"/>
</dbReference>
<dbReference type="NCBIfam" id="NF011104">
    <property type="entry name" value="PRK14531.1"/>
    <property type="match status" value="1"/>
</dbReference>
<dbReference type="NCBIfam" id="NF011105">
    <property type="entry name" value="PRK14532.1"/>
    <property type="match status" value="1"/>
</dbReference>
<dbReference type="PANTHER" id="PTHR23359">
    <property type="entry name" value="NUCLEOTIDE KINASE"/>
    <property type="match status" value="1"/>
</dbReference>
<dbReference type="Pfam" id="PF00406">
    <property type="entry name" value="ADK"/>
    <property type="match status" value="1"/>
</dbReference>
<dbReference type="PRINTS" id="PR00094">
    <property type="entry name" value="ADENYLTKNASE"/>
</dbReference>
<dbReference type="SUPFAM" id="SSF52540">
    <property type="entry name" value="P-loop containing nucleoside triphosphate hydrolases"/>
    <property type="match status" value="1"/>
</dbReference>
<dbReference type="PROSITE" id="PS00113">
    <property type="entry name" value="ADENYLATE_KINASE"/>
    <property type="match status" value="1"/>
</dbReference>
<proteinExistence type="inferred from homology"/>
<feature type="chain" id="PRO_1000100611" description="Adenylate kinase">
    <location>
        <begin position="1"/>
        <end position="187"/>
    </location>
</feature>
<feature type="region of interest" description="NMP" evidence="1">
    <location>
        <begin position="30"/>
        <end position="59"/>
    </location>
</feature>
<feature type="region of interest" description="LID" evidence="1">
    <location>
        <begin position="126"/>
        <end position="136"/>
    </location>
</feature>
<feature type="binding site" evidence="1">
    <location>
        <begin position="10"/>
        <end position="15"/>
    </location>
    <ligand>
        <name>ATP</name>
        <dbReference type="ChEBI" id="CHEBI:30616"/>
    </ligand>
</feature>
<feature type="binding site" evidence="1">
    <location>
        <position position="31"/>
    </location>
    <ligand>
        <name>AMP</name>
        <dbReference type="ChEBI" id="CHEBI:456215"/>
    </ligand>
</feature>
<feature type="binding site" evidence="1">
    <location>
        <position position="36"/>
    </location>
    <ligand>
        <name>AMP</name>
        <dbReference type="ChEBI" id="CHEBI:456215"/>
    </ligand>
</feature>
<feature type="binding site" evidence="1">
    <location>
        <begin position="57"/>
        <end position="59"/>
    </location>
    <ligand>
        <name>AMP</name>
        <dbReference type="ChEBI" id="CHEBI:456215"/>
    </ligand>
</feature>
<feature type="binding site" evidence="1">
    <location>
        <begin position="85"/>
        <end position="88"/>
    </location>
    <ligand>
        <name>AMP</name>
        <dbReference type="ChEBI" id="CHEBI:456215"/>
    </ligand>
</feature>
<feature type="binding site" evidence="1">
    <location>
        <position position="92"/>
    </location>
    <ligand>
        <name>AMP</name>
        <dbReference type="ChEBI" id="CHEBI:456215"/>
    </ligand>
</feature>
<feature type="binding site" evidence="1">
    <location>
        <position position="127"/>
    </location>
    <ligand>
        <name>ATP</name>
        <dbReference type="ChEBI" id="CHEBI:30616"/>
    </ligand>
</feature>
<feature type="binding site" evidence="1">
    <location>
        <position position="133"/>
    </location>
    <ligand>
        <name>AMP</name>
        <dbReference type="ChEBI" id="CHEBI:456215"/>
    </ligand>
</feature>
<feature type="binding site" evidence="1">
    <location>
        <position position="144"/>
    </location>
    <ligand>
        <name>AMP</name>
        <dbReference type="ChEBI" id="CHEBI:456215"/>
    </ligand>
</feature>
<feature type="binding site" evidence="1">
    <location>
        <position position="172"/>
    </location>
    <ligand>
        <name>ATP</name>
        <dbReference type="ChEBI" id="CHEBI:30616"/>
    </ligand>
</feature>
<reference key="1">
    <citation type="submission" date="2008-06" db="EMBL/GenBank/DDBJ databases">
        <title>Complete sequence of Stenotrophomonas maltophilia R551-3.</title>
        <authorList>
            <consortium name="US DOE Joint Genome Institute"/>
            <person name="Lucas S."/>
            <person name="Copeland A."/>
            <person name="Lapidus A."/>
            <person name="Glavina del Rio T."/>
            <person name="Dalin E."/>
            <person name="Tice H."/>
            <person name="Pitluck S."/>
            <person name="Chain P."/>
            <person name="Malfatti S."/>
            <person name="Shin M."/>
            <person name="Vergez L."/>
            <person name="Lang D."/>
            <person name="Schmutz J."/>
            <person name="Larimer F."/>
            <person name="Land M."/>
            <person name="Hauser L."/>
            <person name="Kyrpides N."/>
            <person name="Mikhailova N."/>
            <person name="Taghavi S."/>
            <person name="Monchy S."/>
            <person name="Newman L."/>
            <person name="Vangronsveld J."/>
            <person name="van der Lelie D."/>
            <person name="Richardson P."/>
        </authorList>
    </citation>
    <scope>NUCLEOTIDE SEQUENCE [LARGE SCALE GENOMIC DNA]</scope>
    <source>
        <strain>R551-3</strain>
    </source>
</reference>
<sequence length="187" mass="19744">MRLVLLGPPGSGKGTQATRLKEKLGIAHISTGDMLRAEIAAGSELGKQAKAVMDAGNLVSDDILLGMLESRLTQADVAKGFILDGYPRNVAQANAMDGLLAKIGQPLDAVVQLDVATELLVDRIAGRAKEQGRADDSPEAVRQRLQVYNDQTAPVVDFYAARGTLARVDGVGELDEIEARILAAIKG</sequence>
<name>KAD_STRM5</name>
<protein>
    <recommendedName>
        <fullName evidence="1">Adenylate kinase</fullName>
        <shortName evidence="1">AK</shortName>
        <ecNumber evidence="1">2.7.4.3</ecNumber>
    </recommendedName>
    <alternativeName>
        <fullName evidence="1">ATP-AMP transphosphorylase</fullName>
    </alternativeName>
    <alternativeName>
        <fullName evidence="1">ATP:AMP phosphotransferase</fullName>
    </alternativeName>
    <alternativeName>
        <fullName evidence="1">Adenylate monophosphate kinase</fullName>
    </alternativeName>
</protein>
<comment type="function">
    <text evidence="1">Catalyzes the reversible transfer of the terminal phosphate group between ATP and AMP. Plays an important role in cellular energy homeostasis and in adenine nucleotide metabolism.</text>
</comment>
<comment type="catalytic activity">
    <reaction evidence="1">
        <text>AMP + ATP = 2 ADP</text>
        <dbReference type="Rhea" id="RHEA:12973"/>
        <dbReference type="ChEBI" id="CHEBI:30616"/>
        <dbReference type="ChEBI" id="CHEBI:456215"/>
        <dbReference type="ChEBI" id="CHEBI:456216"/>
        <dbReference type="EC" id="2.7.4.3"/>
    </reaction>
</comment>
<comment type="pathway">
    <text evidence="1">Purine metabolism; AMP biosynthesis via salvage pathway; AMP from ADP: step 1/1.</text>
</comment>
<comment type="subunit">
    <text evidence="1">Monomer.</text>
</comment>
<comment type="subcellular location">
    <subcellularLocation>
        <location evidence="1">Cytoplasm</location>
    </subcellularLocation>
</comment>
<comment type="domain">
    <text evidence="1">Consists of three domains, a large central CORE domain and two small peripheral domains, NMPbind and LID, which undergo movements during catalysis. The LID domain closes over the site of phosphoryl transfer upon ATP binding. Assembling and dissambling the active center during each catalytic cycle provides an effective means to prevent ATP hydrolysis.</text>
</comment>
<comment type="similarity">
    <text evidence="1">Belongs to the adenylate kinase family.</text>
</comment>
<organism>
    <name type="scientific">Stenotrophomonas maltophilia (strain R551-3)</name>
    <dbReference type="NCBI Taxonomy" id="391008"/>
    <lineage>
        <taxon>Bacteria</taxon>
        <taxon>Pseudomonadati</taxon>
        <taxon>Pseudomonadota</taxon>
        <taxon>Gammaproteobacteria</taxon>
        <taxon>Lysobacterales</taxon>
        <taxon>Lysobacteraceae</taxon>
        <taxon>Stenotrophomonas</taxon>
        <taxon>Stenotrophomonas maltophilia group</taxon>
    </lineage>
</organism>
<evidence type="ECO:0000255" key="1">
    <source>
        <dbReference type="HAMAP-Rule" id="MF_00235"/>
    </source>
</evidence>
<accession>B4SI37</accession>
<gene>
    <name evidence="1" type="primary">adk</name>
    <name type="ordered locus">Smal_3302</name>
</gene>
<keyword id="KW-0067">ATP-binding</keyword>
<keyword id="KW-0963">Cytoplasm</keyword>
<keyword id="KW-0418">Kinase</keyword>
<keyword id="KW-0545">Nucleotide biosynthesis</keyword>
<keyword id="KW-0547">Nucleotide-binding</keyword>
<keyword id="KW-0808">Transferase</keyword>